<reference key="1">
    <citation type="journal article" date="2003" name="Genome Res.">
        <title>Comparative genome analysis of Vibrio vulnificus, a marine pathogen.</title>
        <authorList>
            <person name="Chen C.-Y."/>
            <person name="Wu K.-M."/>
            <person name="Chang Y.-C."/>
            <person name="Chang C.-H."/>
            <person name="Tsai H.-C."/>
            <person name="Liao T.-L."/>
            <person name="Liu Y.-M."/>
            <person name="Chen H.-J."/>
            <person name="Shen A.B.-T."/>
            <person name="Li J.-C."/>
            <person name="Su T.-L."/>
            <person name="Shao C.-P."/>
            <person name="Lee C.-T."/>
            <person name="Hor L.-I."/>
            <person name="Tsai S.-F."/>
        </authorList>
    </citation>
    <scope>NUCLEOTIDE SEQUENCE [LARGE SCALE GENOMIC DNA]</scope>
    <source>
        <strain>YJ016</strain>
    </source>
</reference>
<reference key="2">
    <citation type="journal article" date="2015" name="Biochem. J.">
        <title>A directed-overflow and damage-control N-glycosidase in riboflavin biosynthesis.</title>
        <authorList>
            <person name="Frelin O."/>
            <person name="Huang L."/>
            <person name="Hasnain G."/>
            <person name="Jeffryes J.G."/>
            <person name="Ziemak M.J."/>
            <person name="Rocca J.R."/>
            <person name="Wang B."/>
            <person name="Rice J."/>
            <person name="Roje S."/>
            <person name="Yurgel S.N."/>
            <person name="Gregory J.F. III"/>
            <person name="Edison A.S."/>
            <person name="Henry C.S."/>
            <person name="de Crecy-Lagard V."/>
            <person name="Hanson A.D."/>
        </authorList>
    </citation>
    <scope>FUNCTION</scope>
    <scope>CATALYTIC ACTIVITY</scope>
    <scope>SUBSTRATE SPECIFICITY</scope>
    <scope>BIOPHYSICOCHEMICAL PROPERTIES</scope>
    <scope>PATHWAY</scope>
</reference>
<accession>Q7MGG3</accession>
<dbReference type="EC" id="3.2.2.-" evidence="2"/>
<dbReference type="EC" id="3.5.4.25" evidence="2"/>
<dbReference type="EMBL" id="BA000038">
    <property type="protein sequence ID" value="BAC96032.1"/>
    <property type="molecule type" value="Genomic_DNA"/>
</dbReference>
<dbReference type="SMR" id="Q7MGG3"/>
<dbReference type="STRING" id="672.VV93_v1c30170"/>
<dbReference type="KEGG" id="vvy:VVA0006"/>
<dbReference type="eggNOG" id="COG0807">
    <property type="taxonomic scope" value="Bacteria"/>
</dbReference>
<dbReference type="eggNOG" id="COG3236">
    <property type="taxonomic scope" value="Bacteria"/>
</dbReference>
<dbReference type="HOGENOM" id="CLU_020273_2_1_6"/>
<dbReference type="UniPathway" id="UPA00275">
    <property type="reaction ID" value="UER00400"/>
</dbReference>
<dbReference type="Proteomes" id="UP000002675">
    <property type="component" value="Chromosome II"/>
</dbReference>
<dbReference type="GO" id="GO:0005829">
    <property type="term" value="C:cytosol"/>
    <property type="evidence" value="ECO:0007669"/>
    <property type="project" value="TreeGrafter"/>
</dbReference>
<dbReference type="GO" id="GO:0005525">
    <property type="term" value="F:GTP binding"/>
    <property type="evidence" value="ECO:0007669"/>
    <property type="project" value="UniProtKB-KW"/>
</dbReference>
<dbReference type="GO" id="GO:0003935">
    <property type="term" value="F:GTP cyclohydrolase II activity"/>
    <property type="evidence" value="ECO:0000316"/>
    <property type="project" value="UniProtKB"/>
</dbReference>
<dbReference type="GO" id="GO:0016799">
    <property type="term" value="F:hydrolase activity, hydrolyzing N-glycosyl compounds"/>
    <property type="evidence" value="ECO:0000314"/>
    <property type="project" value="UniProtKB"/>
</dbReference>
<dbReference type="GO" id="GO:0008270">
    <property type="term" value="F:zinc ion binding"/>
    <property type="evidence" value="ECO:0007669"/>
    <property type="project" value="UniProtKB-UniRule"/>
</dbReference>
<dbReference type="GO" id="GO:1901135">
    <property type="term" value="P:carbohydrate derivative metabolic process"/>
    <property type="evidence" value="ECO:0000314"/>
    <property type="project" value="UniProtKB"/>
</dbReference>
<dbReference type="GO" id="GO:0009231">
    <property type="term" value="P:riboflavin biosynthetic process"/>
    <property type="evidence" value="ECO:0000316"/>
    <property type="project" value="UniProtKB"/>
</dbReference>
<dbReference type="CDD" id="cd00641">
    <property type="entry name" value="GTP_cyclohydro2"/>
    <property type="match status" value="1"/>
</dbReference>
<dbReference type="CDD" id="cd15457">
    <property type="entry name" value="NADAR"/>
    <property type="match status" value="1"/>
</dbReference>
<dbReference type="FunFam" id="3.40.50.10990:FF:000002">
    <property type="entry name" value="GTP cyclohydrolase-2"/>
    <property type="match status" value="1"/>
</dbReference>
<dbReference type="Gene3D" id="3.40.50.10990">
    <property type="entry name" value="GTP cyclohydrolase II"/>
    <property type="match status" value="1"/>
</dbReference>
<dbReference type="Gene3D" id="1.10.357.40">
    <property type="entry name" value="YbiA-like"/>
    <property type="match status" value="1"/>
</dbReference>
<dbReference type="HAMAP" id="MF_00179">
    <property type="entry name" value="RibA"/>
    <property type="match status" value="1"/>
</dbReference>
<dbReference type="InterPro" id="IPR032677">
    <property type="entry name" value="GTP_cyclohydro_II"/>
</dbReference>
<dbReference type="InterPro" id="IPR012816">
    <property type="entry name" value="NADAR"/>
</dbReference>
<dbReference type="InterPro" id="IPR000926">
    <property type="entry name" value="RibA"/>
</dbReference>
<dbReference type="InterPro" id="IPR036144">
    <property type="entry name" value="RibA-like_sf"/>
</dbReference>
<dbReference type="InterPro" id="IPR037238">
    <property type="entry name" value="YbiA-like_sf"/>
</dbReference>
<dbReference type="NCBIfam" id="NF001591">
    <property type="entry name" value="PRK00393.1"/>
    <property type="match status" value="1"/>
</dbReference>
<dbReference type="NCBIfam" id="TIGR00505">
    <property type="entry name" value="ribA"/>
    <property type="match status" value="1"/>
</dbReference>
<dbReference type="NCBIfam" id="TIGR02464">
    <property type="entry name" value="ribofla_fusion"/>
    <property type="match status" value="1"/>
</dbReference>
<dbReference type="PANTHER" id="PTHR21327:SF18">
    <property type="entry name" value="3,4-DIHYDROXY-2-BUTANONE 4-PHOSPHATE SYNTHASE"/>
    <property type="match status" value="1"/>
</dbReference>
<dbReference type="PANTHER" id="PTHR21327">
    <property type="entry name" value="GTP CYCLOHYDROLASE II-RELATED"/>
    <property type="match status" value="1"/>
</dbReference>
<dbReference type="Pfam" id="PF00925">
    <property type="entry name" value="GTP_cyclohydro2"/>
    <property type="match status" value="1"/>
</dbReference>
<dbReference type="Pfam" id="PF08719">
    <property type="entry name" value="NADAR"/>
    <property type="match status" value="1"/>
</dbReference>
<dbReference type="PIRSF" id="PIRSF001259">
    <property type="entry name" value="RibA"/>
    <property type="match status" value="1"/>
</dbReference>
<dbReference type="SUPFAM" id="SSF142695">
    <property type="entry name" value="RibA-like"/>
    <property type="match status" value="1"/>
</dbReference>
<dbReference type="SUPFAM" id="SSF143990">
    <property type="entry name" value="YbiA-like"/>
    <property type="match status" value="1"/>
</dbReference>
<proteinExistence type="evidence at protein level"/>
<organism>
    <name type="scientific">Vibrio vulnificus (strain YJ016)</name>
    <dbReference type="NCBI Taxonomy" id="196600"/>
    <lineage>
        <taxon>Bacteria</taxon>
        <taxon>Pseudomonadati</taxon>
        <taxon>Pseudomonadota</taxon>
        <taxon>Gammaproteobacteria</taxon>
        <taxon>Vibrionales</taxon>
        <taxon>Vibrionaceae</taxon>
        <taxon>Vibrio</taxon>
    </lineage>
</organism>
<evidence type="ECO:0000250" key="1">
    <source>
        <dbReference type="UniProtKB" id="P0A7I7"/>
    </source>
</evidence>
<evidence type="ECO:0000269" key="2">
    <source>
    </source>
</evidence>
<evidence type="ECO:0000303" key="3">
    <source>
    </source>
</evidence>
<evidence type="ECO:0000305" key="4"/>
<evidence type="ECO:0000305" key="5">
    <source>
    </source>
</evidence>
<evidence type="ECO:0000312" key="6">
    <source>
        <dbReference type="EMBL" id="BAC96032.1"/>
    </source>
</evidence>
<comment type="function">
    <text evidence="2">Catalyzes the hydrolysis of the N-glycosidic bond in the first two intermediates of riboflavin biosynthesis, which are highly reactive metabolites, yielding relatively innocuous products. Thus, can divert a surplus of harmful intermediates into relatively harmless products and pre-empt the damage these intermediates would otherwise do. Has no activity against GTP, nucleoside monophosphates or ADP-ribose.</text>
</comment>
<comment type="function">
    <text evidence="2">Catalyzes the conversion of GTP to 2,5-diamino-6-ribosylamino-4(3H)-pyrimidinone 5'-phosphate (DARP), formate and pyrophosphate.</text>
</comment>
<comment type="catalytic activity">
    <reaction evidence="2">
        <text>2,5-diamino-6-hydroxy-4-(5-phosphoribosylamino)-pyrimidine + H2O = 2,5,6-triamino-4-hydroxypyrimidine + D-ribose 5-phosphate</text>
        <dbReference type="Rhea" id="RHEA:23436"/>
        <dbReference type="ChEBI" id="CHEBI:15377"/>
        <dbReference type="ChEBI" id="CHEBI:58614"/>
        <dbReference type="ChEBI" id="CHEBI:78346"/>
        <dbReference type="ChEBI" id="CHEBI:137796"/>
    </reaction>
</comment>
<comment type="catalytic activity">
    <reaction evidence="2">
        <text>5-amino-6-(5-phospho-D-ribosylamino)uracil + H2O = 5,6-diaminouracil + D-ribose 5-phosphate</text>
        <dbReference type="Rhea" id="RHEA:55020"/>
        <dbReference type="ChEBI" id="CHEBI:15377"/>
        <dbReference type="ChEBI" id="CHEBI:46252"/>
        <dbReference type="ChEBI" id="CHEBI:58453"/>
        <dbReference type="ChEBI" id="CHEBI:78346"/>
    </reaction>
</comment>
<comment type="catalytic activity">
    <reaction evidence="2">
        <text>GTP + 4 H2O = 2,5-diamino-6-hydroxy-4-(5-phosphoribosylamino)-pyrimidine + formate + 2 phosphate + 3 H(+)</text>
        <dbReference type="Rhea" id="RHEA:23704"/>
        <dbReference type="ChEBI" id="CHEBI:15377"/>
        <dbReference type="ChEBI" id="CHEBI:15378"/>
        <dbReference type="ChEBI" id="CHEBI:15740"/>
        <dbReference type="ChEBI" id="CHEBI:37565"/>
        <dbReference type="ChEBI" id="CHEBI:43474"/>
        <dbReference type="ChEBI" id="CHEBI:58614"/>
        <dbReference type="EC" id="3.5.4.25"/>
    </reaction>
</comment>
<comment type="cofactor">
    <cofactor evidence="1">
        <name>Zn(2+)</name>
        <dbReference type="ChEBI" id="CHEBI:29105"/>
    </cofactor>
    <text evidence="1">Binds 1 zinc ion per subunit.</text>
</comment>
<comment type="biophysicochemical properties">
    <kinetics>
        <KM evidence="2">0.45 mM for 2,5-diamino-6-hydroxy-4-(5-phospho-D-ribosylamino)pyrimidine</KM>
        <KM evidence="2">0.51 mM for 5-amino-6-(5-phospho-D-ribosylamino)uracil</KM>
        <text evidence="2">kcat is 137 sec(-1) with 2,5-diamino-6-hydroxy-4-(5-phospho-D-ribosylamino)pyrimidine as substrate. kcat is 0.07 sec(-1) with 5-amino-6-(5-phospho-D-ribosylamino)uracil as substrate.</text>
    </kinetics>
</comment>
<comment type="pathway">
    <text evidence="5">Cofactor biosynthesis; riboflavin biosynthesis; 5-amino-6-(D-ribitylamino)uracil from GTP: step 1/4.</text>
</comment>
<comment type="similarity">
    <text evidence="4">In the N-terminal section; belongs to the YbiA family.</text>
</comment>
<comment type="similarity">
    <text evidence="4">In the C-terminal section; belongs to the GTP cyclohydrolase II family.</text>
</comment>
<keyword id="KW-0326">Glycosidase</keyword>
<keyword id="KW-0342">GTP-binding</keyword>
<keyword id="KW-0378">Hydrolase</keyword>
<keyword id="KW-0479">Metal-binding</keyword>
<keyword id="KW-0511">Multifunctional enzyme</keyword>
<keyword id="KW-0547">Nucleotide-binding</keyword>
<keyword id="KW-0686">Riboflavin biosynthesis</keyword>
<keyword id="KW-0862">Zinc</keyword>
<protein>
    <recommendedName>
        <fullName evidence="4">Riboflavin biosynthesis protein VVA0006</fullName>
    </recommendedName>
    <domain>
        <recommendedName>
            <fullName evidence="5">Riboflavin biosynthesis intermediates N-glycosidase</fullName>
            <ecNumber evidence="2">3.2.2.-</ecNumber>
        </recommendedName>
    </domain>
    <domain>
        <recommendedName>
            <fullName>GTP cyclohydrolase-2</fullName>
            <ecNumber evidence="2">3.5.4.25</ecNumber>
        </recommendedName>
        <alternativeName>
            <fullName evidence="3">GTP cyclohydrolase II</fullName>
        </alternativeName>
    </domain>
</protein>
<sequence>MHFVSYSLCYDVRSNIMEQPIYFYEPDENHGFLANFYPCSITVSGTCWPSSEHYYQAQKFDDVRLQEKVLRAEDAAQAFRLSREYQQWQRHDWYDIRVEVMRFIVREKFLQNTPLAHQLLATGDTELKEHSHKDAFWGDGGDGHGRNELGRILMMVREELQEHAPYNLVQFIDSAKLPTQWGTFQMYGFIEKATGKEHLALVYGDIEQQAAPLIRLHSECLTGDALFSARCDCGFQLAKALQNIVAEGAGVLLYLRQEGRGIGLINKIRAYHLQDDGADTVEANEQLGFGADMRDYAFCRGILSFLGIERVRLMTNNPRKVKALQLANIEVTERVPLQEGNNPHNHQYLRTKADKLGHMFDRNFVKP</sequence>
<name>RIBXA_VIBVY</name>
<gene>
    <name evidence="6" type="ordered locus">VVA0006</name>
</gene>
<feature type="chain" id="PRO_0000433624" description="Riboflavin biosynthesis protein VVA0006">
    <location>
        <begin position="1"/>
        <end position="367"/>
    </location>
</feature>
<feature type="active site" description="Proton acceptor" evidence="1">
    <location>
        <position position="292"/>
    </location>
</feature>
<feature type="active site" description="Nucleophile" evidence="1">
    <location>
        <position position="294"/>
    </location>
</feature>
<feature type="binding site" evidence="1">
    <location>
        <begin position="215"/>
        <end position="219"/>
    </location>
    <ligand>
        <name>GTP</name>
        <dbReference type="ChEBI" id="CHEBI:37565"/>
    </ligand>
</feature>
<feature type="binding site" evidence="1">
    <location>
        <position position="220"/>
    </location>
    <ligand>
        <name>Zn(2+)</name>
        <dbReference type="ChEBI" id="CHEBI:29105"/>
        <note>catalytic</note>
    </ligand>
</feature>
<feature type="binding site" evidence="1">
    <location>
        <position position="231"/>
    </location>
    <ligand>
        <name>Zn(2+)</name>
        <dbReference type="ChEBI" id="CHEBI:29105"/>
        <note>catalytic</note>
    </ligand>
</feature>
<feature type="binding site" evidence="1">
    <location>
        <position position="233"/>
    </location>
    <ligand>
        <name>Zn(2+)</name>
        <dbReference type="ChEBI" id="CHEBI:29105"/>
        <note>catalytic</note>
    </ligand>
</feature>
<feature type="binding site" evidence="1">
    <location>
        <position position="236"/>
    </location>
    <ligand>
        <name>GTP</name>
        <dbReference type="ChEBI" id="CHEBI:37565"/>
    </ligand>
</feature>
<feature type="binding site" evidence="1">
    <location>
        <begin position="258"/>
        <end position="260"/>
    </location>
    <ligand>
        <name>GTP</name>
        <dbReference type="ChEBI" id="CHEBI:37565"/>
    </ligand>
</feature>
<feature type="binding site" evidence="1">
    <location>
        <position position="280"/>
    </location>
    <ligand>
        <name>GTP</name>
        <dbReference type="ChEBI" id="CHEBI:37565"/>
    </ligand>
</feature>
<feature type="binding site" evidence="1">
    <location>
        <position position="315"/>
    </location>
    <ligand>
        <name>GTP</name>
        <dbReference type="ChEBI" id="CHEBI:37565"/>
    </ligand>
</feature>
<feature type="binding site" evidence="1">
    <location>
        <position position="320"/>
    </location>
    <ligand>
        <name>GTP</name>
        <dbReference type="ChEBI" id="CHEBI:37565"/>
    </ligand>
</feature>